<proteinExistence type="inferred from homology"/>
<sequence>MARVTVEDCLDNVDNRFELVLAGAKRARQLAKGIEPLVDWENDKPTVVALREIAAGHVTSEILTSTEESAADSLSLGGFSTADVEAEVGGGPVQPDPGASQERAFDEAADGTAQGSGDPDPTT</sequence>
<accession>A1WVN4</accession>
<feature type="chain" id="PRO_1000005937" description="DNA-directed RNA polymerase subunit omega">
    <location>
        <begin position="1"/>
        <end position="123"/>
    </location>
</feature>
<feature type="region of interest" description="Disordered" evidence="2">
    <location>
        <begin position="67"/>
        <end position="123"/>
    </location>
</feature>
<evidence type="ECO:0000255" key="1">
    <source>
        <dbReference type="HAMAP-Rule" id="MF_00366"/>
    </source>
</evidence>
<evidence type="ECO:0000256" key="2">
    <source>
        <dbReference type="SAM" id="MobiDB-lite"/>
    </source>
</evidence>
<keyword id="KW-0240">DNA-directed RNA polymerase</keyword>
<keyword id="KW-0548">Nucleotidyltransferase</keyword>
<keyword id="KW-1185">Reference proteome</keyword>
<keyword id="KW-0804">Transcription</keyword>
<keyword id="KW-0808">Transferase</keyword>
<reference key="1">
    <citation type="submission" date="2006-12" db="EMBL/GenBank/DDBJ databases">
        <title>Complete sequence of Halorhodospira halophila SL1.</title>
        <authorList>
            <consortium name="US DOE Joint Genome Institute"/>
            <person name="Copeland A."/>
            <person name="Lucas S."/>
            <person name="Lapidus A."/>
            <person name="Barry K."/>
            <person name="Detter J.C."/>
            <person name="Glavina del Rio T."/>
            <person name="Hammon N."/>
            <person name="Israni S."/>
            <person name="Dalin E."/>
            <person name="Tice H."/>
            <person name="Pitluck S."/>
            <person name="Saunders E."/>
            <person name="Brettin T."/>
            <person name="Bruce D."/>
            <person name="Han C."/>
            <person name="Tapia R."/>
            <person name="Schmutz J."/>
            <person name="Larimer F."/>
            <person name="Land M."/>
            <person name="Hauser L."/>
            <person name="Kyrpides N."/>
            <person name="Mikhailova N."/>
            <person name="Hoff W."/>
            <person name="Richardson P."/>
        </authorList>
    </citation>
    <scope>NUCLEOTIDE SEQUENCE [LARGE SCALE GENOMIC DNA]</scope>
    <source>
        <strain>DSM 244 / SL1</strain>
    </source>
</reference>
<organism>
    <name type="scientific">Halorhodospira halophila (strain DSM 244 / SL1)</name>
    <name type="common">Ectothiorhodospira halophila (strain DSM 244 / SL1)</name>
    <dbReference type="NCBI Taxonomy" id="349124"/>
    <lineage>
        <taxon>Bacteria</taxon>
        <taxon>Pseudomonadati</taxon>
        <taxon>Pseudomonadota</taxon>
        <taxon>Gammaproteobacteria</taxon>
        <taxon>Chromatiales</taxon>
        <taxon>Ectothiorhodospiraceae</taxon>
        <taxon>Halorhodospira</taxon>
    </lineage>
</organism>
<comment type="function">
    <text evidence="1">Promotes RNA polymerase assembly. Latches the N- and C-terminal regions of the beta' subunit thereby facilitating its interaction with the beta and alpha subunits.</text>
</comment>
<comment type="catalytic activity">
    <reaction evidence="1">
        <text>RNA(n) + a ribonucleoside 5'-triphosphate = RNA(n+1) + diphosphate</text>
        <dbReference type="Rhea" id="RHEA:21248"/>
        <dbReference type="Rhea" id="RHEA-COMP:14527"/>
        <dbReference type="Rhea" id="RHEA-COMP:17342"/>
        <dbReference type="ChEBI" id="CHEBI:33019"/>
        <dbReference type="ChEBI" id="CHEBI:61557"/>
        <dbReference type="ChEBI" id="CHEBI:140395"/>
        <dbReference type="EC" id="2.7.7.6"/>
    </reaction>
</comment>
<comment type="subunit">
    <text evidence="1">The RNAP catalytic core consists of 2 alpha, 1 beta, 1 beta' and 1 omega subunit. When a sigma factor is associated with the core the holoenzyme is formed, which can initiate transcription.</text>
</comment>
<comment type="similarity">
    <text evidence="1">Belongs to the RNA polymerase subunit omega family.</text>
</comment>
<protein>
    <recommendedName>
        <fullName evidence="1">DNA-directed RNA polymerase subunit omega</fullName>
        <shortName evidence="1">RNAP omega subunit</shortName>
        <ecNumber evidence="1">2.7.7.6</ecNumber>
    </recommendedName>
    <alternativeName>
        <fullName evidence="1">RNA polymerase omega subunit</fullName>
    </alternativeName>
    <alternativeName>
        <fullName evidence="1">Transcriptase subunit omega</fullName>
    </alternativeName>
</protein>
<name>RPOZ_HALHL</name>
<gene>
    <name evidence="1" type="primary">rpoZ</name>
    <name type="ordered locus">Hhal_0970</name>
</gene>
<dbReference type="EC" id="2.7.7.6" evidence="1"/>
<dbReference type="EMBL" id="CP000544">
    <property type="protein sequence ID" value="ABM61746.1"/>
    <property type="molecule type" value="Genomic_DNA"/>
</dbReference>
<dbReference type="RefSeq" id="WP_011813769.1">
    <property type="nucleotide sequence ID" value="NC_008789.1"/>
</dbReference>
<dbReference type="SMR" id="A1WVN4"/>
<dbReference type="STRING" id="349124.Hhal_0970"/>
<dbReference type="KEGG" id="hha:Hhal_0970"/>
<dbReference type="eggNOG" id="COG1758">
    <property type="taxonomic scope" value="Bacteria"/>
</dbReference>
<dbReference type="HOGENOM" id="CLU_2012057_0_0_6"/>
<dbReference type="OrthoDB" id="9796300at2"/>
<dbReference type="Proteomes" id="UP000000647">
    <property type="component" value="Chromosome"/>
</dbReference>
<dbReference type="GO" id="GO:0000428">
    <property type="term" value="C:DNA-directed RNA polymerase complex"/>
    <property type="evidence" value="ECO:0007669"/>
    <property type="project" value="UniProtKB-KW"/>
</dbReference>
<dbReference type="GO" id="GO:0003677">
    <property type="term" value="F:DNA binding"/>
    <property type="evidence" value="ECO:0007669"/>
    <property type="project" value="UniProtKB-UniRule"/>
</dbReference>
<dbReference type="GO" id="GO:0003899">
    <property type="term" value="F:DNA-directed RNA polymerase activity"/>
    <property type="evidence" value="ECO:0007669"/>
    <property type="project" value="UniProtKB-UniRule"/>
</dbReference>
<dbReference type="GO" id="GO:0006351">
    <property type="term" value="P:DNA-templated transcription"/>
    <property type="evidence" value="ECO:0007669"/>
    <property type="project" value="UniProtKB-UniRule"/>
</dbReference>
<dbReference type="Gene3D" id="3.90.940.10">
    <property type="match status" value="1"/>
</dbReference>
<dbReference type="HAMAP" id="MF_00366">
    <property type="entry name" value="RNApol_bact_RpoZ"/>
    <property type="match status" value="1"/>
</dbReference>
<dbReference type="InterPro" id="IPR003716">
    <property type="entry name" value="DNA-dir_RNA_pol_omega"/>
</dbReference>
<dbReference type="InterPro" id="IPR006110">
    <property type="entry name" value="Pol_omega/Rpo6/RPB6"/>
</dbReference>
<dbReference type="InterPro" id="IPR036161">
    <property type="entry name" value="RPB6/omega-like_sf"/>
</dbReference>
<dbReference type="NCBIfam" id="TIGR00690">
    <property type="entry name" value="rpoZ"/>
    <property type="match status" value="1"/>
</dbReference>
<dbReference type="PANTHER" id="PTHR34476">
    <property type="entry name" value="DNA-DIRECTED RNA POLYMERASE SUBUNIT OMEGA"/>
    <property type="match status" value="1"/>
</dbReference>
<dbReference type="PANTHER" id="PTHR34476:SF1">
    <property type="entry name" value="DNA-DIRECTED RNA POLYMERASE SUBUNIT OMEGA"/>
    <property type="match status" value="1"/>
</dbReference>
<dbReference type="Pfam" id="PF01192">
    <property type="entry name" value="RNA_pol_Rpb6"/>
    <property type="match status" value="1"/>
</dbReference>
<dbReference type="SMART" id="SM01409">
    <property type="entry name" value="RNA_pol_Rpb6"/>
    <property type="match status" value="1"/>
</dbReference>
<dbReference type="SUPFAM" id="SSF63562">
    <property type="entry name" value="RPB6/omega subunit-like"/>
    <property type="match status" value="1"/>
</dbReference>